<organism>
    <name type="scientific">Aeromonas salmonicida (strain A449)</name>
    <dbReference type="NCBI Taxonomy" id="382245"/>
    <lineage>
        <taxon>Bacteria</taxon>
        <taxon>Pseudomonadati</taxon>
        <taxon>Pseudomonadota</taxon>
        <taxon>Gammaproteobacteria</taxon>
        <taxon>Aeromonadales</taxon>
        <taxon>Aeromonadaceae</taxon>
        <taxon>Aeromonas</taxon>
    </lineage>
</organism>
<accession>A4SP10</accession>
<proteinExistence type="inferred from homology"/>
<dbReference type="EMBL" id="CP000644">
    <property type="protein sequence ID" value="ABO90632.1"/>
    <property type="molecule type" value="Genomic_DNA"/>
</dbReference>
<dbReference type="RefSeq" id="WP_005310411.1">
    <property type="nucleotide sequence ID" value="NC_009348.1"/>
</dbReference>
<dbReference type="SMR" id="A4SP10"/>
<dbReference type="STRING" id="29491.GCA_000820065_00273"/>
<dbReference type="KEGG" id="asa:ASA_2608"/>
<dbReference type="eggNOG" id="COG1076">
    <property type="taxonomic scope" value="Bacteria"/>
</dbReference>
<dbReference type="HOGENOM" id="CLU_068529_2_0_6"/>
<dbReference type="Proteomes" id="UP000000225">
    <property type="component" value="Chromosome"/>
</dbReference>
<dbReference type="GO" id="GO:1990230">
    <property type="term" value="C:iron-sulfur cluster transfer complex"/>
    <property type="evidence" value="ECO:0007669"/>
    <property type="project" value="TreeGrafter"/>
</dbReference>
<dbReference type="GO" id="GO:0001671">
    <property type="term" value="F:ATPase activator activity"/>
    <property type="evidence" value="ECO:0007669"/>
    <property type="project" value="InterPro"/>
</dbReference>
<dbReference type="GO" id="GO:0051087">
    <property type="term" value="F:protein-folding chaperone binding"/>
    <property type="evidence" value="ECO:0007669"/>
    <property type="project" value="InterPro"/>
</dbReference>
<dbReference type="GO" id="GO:0044571">
    <property type="term" value="P:[2Fe-2S] cluster assembly"/>
    <property type="evidence" value="ECO:0007669"/>
    <property type="project" value="InterPro"/>
</dbReference>
<dbReference type="GO" id="GO:0051259">
    <property type="term" value="P:protein complex oligomerization"/>
    <property type="evidence" value="ECO:0007669"/>
    <property type="project" value="InterPro"/>
</dbReference>
<dbReference type="GO" id="GO:0006457">
    <property type="term" value="P:protein folding"/>
    <property type="evidence" value="ECO:0007669"/>
    <property type="project" value="UniProtKB-UniRule"/>
</dbReference>
<dbReference type="CDD" id="cd06257">
    <property type="entry name" value="DnaJ"/>
    <property type="match status" value="1"/>
</dbReference>
<dbReference type="Gene3D" id="1.10.287.110">
    <property type="entry name" value="DnaJ domain"/>
    <property type="match status" value="1"/>
</dbReference>
<dbReference type="Gene3D" id="1.20.1280.20">
    <property type="entry name" value="HscB, C-terminal domain"/>
    <property type="match status" value="1"/>
</dbReference>
<dbReference type="HAMAP" id="MF_00682">
    <property type="entry name" value="HscB"/>
    <property type="match status" value="1"/>
</dbReference>
<dbReference type="InterPro" id="IPR001623">
    <property type="entry name" value="DnaJ_domain"/>
</dbReference>
<dbReference type="InterPro" id="IPR004640">
    <property type="entry name" value="HscB"/>
</dbReference>
<dbReference type="InterPro" id="IPR036386">
    <property type="entry name" value="HscB_C_sf"/>
</dbReference>
<dbReference type="InterPro" id="IPR009073">
    <property type="entry name" value="HscB_oligo_C"/>
</dbReference>
<dbReference type="InterPro" id="IPR036869">
    <property type="entry name" value="J_dom_sf"/>
</dbReference>
<dbReference type="NCBIfam" id="TIGR00714">
    <property type="entry name" value="hscB"/>
    <property type="match status" value="1"/>
</dbReference>
<dbReference type="NCBIfam" id="NF003449">
    <property type="entry name" value="PRK05014.1"/>
    <property type="match status" value="1"/>
</dbReference>
<dbReference type="PANTHER" id="PTHR14021">
    <property type="entry name" value="IRON-SULFUR CLUSTER CO-CHAPERONE PROTEIN HSCB"/>
    <property type="match status" value="1"/>
</dbReference>
<dbReference type="PANTHER" id="PTHR14021:SF15">
    <property type="entry name" value="IRON-SULFUR CLUSTER CO-CHAPERONE PROTEIN HSCB"/>
    <property type="match status" value="1"/>
</dbReference>
<dbReference type="Pfam" id="PF07743">
    <property type="entry name" value="HSCB_C"/>
    <property type="match status" value="1"/>
</dbReference>
<dbReference type="SMART" id="SM00271">
    <property type="entry name" value="DnaJ"/>
    <property type="match status" value="1"/>
</dbReference>
<dbReference type="SUPFAM" id="SSF46565">
    <property type="entry name" value="Chaperone J-domain"/>
    <property type="match status" value="1"/>
</dbReference>
<dbReference type="SUPFAM" id="SSF47144">
    <property type="entry name" value="HSC20 (HSCB), C-terminal oligomerisation domain"/>
    <property type="match status" value="1"/>
</dbReference>
<dbReference type="PROSITE" id="PS50076">
    <property type="entry name" value="DNAJ_2"/>
    <property type="match status" value="1"/>
</dbReference>
<protein>
    <recommendedName>
        <fullName evidence="1">Co-chaperone protein HscB homolog</fullName>
    </recommendedName>
</protein>
<comment type="function">
    <text evidence="1">Co-chaperone involved in the maturation of iron-sulfur cluster-containing proteins. Seems to help targeting proteins to be folded toward HscA.</text>
</comment>
<comment type="subunit">
    <text evidence="1">Interacts with HscA and stimulates its ATPase activity.</text>
</comment>
<comment type="similarity">
    <text evidence="1">Belongs to the HscB family.</text>
</comment>
<keyword id="KW-0143">Chaperone</keyword>
<feature type="chain" id="PRO_1000082995" description="Co-chaperone protein HscB homolog">
    <location>
        <begin position="1"/>
        <end position="172"/>
    </location>
</feature>
<feature type="domain" description="J" evidence="1">
    <location>
        <begin position="2"/>
        <end position="74"/>
    </location>
</feature>
<name>HSCB_AERS4</name>
<reference key="1">
    <citation type="journal article" date="2008" name="BMC Genomics">
        <title>The genome of Aeromonas salmonicida subsp. salmonicida A449: insights into the evolution of a fish pathogen.</title>
        <authorList>
            <person name="Reith M.E."/>
            <person name="Singh R.K."/>
            <person name="Curtis B."/>
            <person name="Boyd J.M."/>
            <person name="Bouevitch A."/>
            <person name="Kimball J."/>
            <person name="Munholland J."/>
            <person name="Murphy C."/>
            <person name="Sarty D."/>
            <person name="Williams J."/>
            <person name="Nash J.H."/>
            <person name="Johnson S.C."/>
            <person name="Brown L.L."/>
        </authorList>
    </citation>
    <scope>NUCLEOTIDE SEQUENCE [LARGE SCALE GENOMIC DNA]</scope>
    <source>
        <strain>A449</strain>
    </source>
</reference>
<gene>
    <name evidence="1" type="primary">hscB</name>
    <name type="ordered locus">ASA_2608</name>
</gene>
<evidence type="ECO:0000255" key="1">
    <source>
        <dbReference type="HAMAP-Rule" id="MF_00682"/>
    </source>
</evidence>
<sequence length="172" mass="19956">MNHFELFGLVEGFELDTRKLADTYRQLQTQFHPDRFATAPEREQLVAVQRAAQINDAYTTLKTPLRRAEYLLSLRGTDIRGEQQTLQDTSFLMQQLEWRERLADLKGEADPEGAIKDFRQEIGHDHQLLMQQLTLTLAAGDDLIAADCVRKLKFVDKLLEELERFEDSLFES</sequence>